<reference key="1">
    <citation type="submission" date="2005-12" db="EMBL/GenBank/DDBJ databases">
        <authorList>
            <consortium name="NIH - Xenopus Gene Collection (XGC) project"/>
        </authorList>
    </citation>
    <scope>NUCLEOTIDE SEQUENCE [LARGE SCALE MRNA]</scope>
    <source>
        <tissue>Oocyte</tissue>
    </source>
</reference>
<accession>Q2TAF4</accession>
<name>INT6A_XENLA</name>
<gene>
    <name type="primary">ints6-a</name>
</gene>
<keyword id="KW-0158">Chromosome</keyword>
<keyword id="KW-0539">Nucleus</keyword>
<keyword id="KW-1185">Reference proteome</keyword>
<dbReference type="EMBL" id="BC110952">
    <property type="protein sequence ID" value="AAI10953.1"/>
    <property type="molecule type" value="mRNA"/>
</dbReference>
<dbReference type="SMR" id="Q2TAF4"/>
<dbReference type="BioGRID" id="592802">
    <property type="interactions" value="1"/>
</dbReference>
<dbReference type="DNASU" id="735021"/>
<dbReference type="GeneID" id="735021"/>
<dbReference type="KEGG" id="xla:735021"/>
<dbReference type="AGR" id="Xenbase:XB-GENE-6254510"/>
<dbReference type="CTD" id="735021"/>
<dbReference type="Xenbase" id="XB-GENE-6254510">
    <property type="gene designation" value="ints6.L"/>
</dbReference>
<dbReference type="OrthoDB" id="9449012at2759"/>
<dbReference type="Proteomes" id="UP000186698">
    <property type="component" value="Chromosome 2L"/>
</dbReference>
<dbReference type="Bgee" id="735021">
    <property type="expression patterns" value="Expressed in blastula and 19 other cell types or tissues"/>
</dbReference>
<dbReference type="GO" id="GO:0000785">
    <property type="term" value="C:chromatin"/>
    <property type="evidence" value="ECO:0000250"/>
    <property type="project" value="UniProtKB"/>
</dbReference>
<dbReference type="GO" id="GO:0160232">
    <property type="term" value="C:INTAC complex"/>
    <property type="evidence" value="ECO:0000250"/>
    <property type="project" value="UniProtKB"/>
</dbReference>
<dbReference type="GO" id="GO:0032039">
    <property type="term" value="C:integrator complex"/>
    <property type="evidence" value="ECO:0000318"/>
    <property type="project" value="GO_Central"/>
</dbReference>
<dbReference type="GO" id="GO:0005634">
    <property type="term" value="C:nucleus"/>
    <property type="evidence" value="ECO:0000250"/>
    <property type="project" value="UniProtKB"/>
</dbReference>
<dbReference type="GO" id="GO:0030674">
    <property type="term" value="F:protein-macromolecule adaptor activity"/>
    <property type="evidence" value="ECO:0000250"/>
    <property type="project" value="UniProtKB"/>
</dbReference>
<dbReference type="GO" id="GO:0071168">
    <property type="term" value="P:protein localization to chromatin"/>
    <property type="evidence" value="ECO:0000250"/>
    <property type="project" value="UniProtKB"/>
</dbReference>
<dbReference type="GO" id="GO:0160240">
    <property type="term" value="P:RNA polymerase II transcription initiation surveillance"/>
    <property type="evidence" value="ECO:0000250"/>
    <property type="project" value="UniProtKB"/>
</dbReference>
<dbReference type="GO" id="GO:0034472">
    <property type="term" value="P:snRNA 3'-end processing"/>
    <property type="evidence" value="ECO:0000318"/>
    <property type="project" value="GO_Central"/>
</dbReference>
<dbReference type="CDD" id="cd00198">
    <property type="entry name" value="vWFA"/>
    <property type="match status" value="1"/>
</dbReference>
<dbReference type="FunFam" id="3.40.50.410:FF:000010">
    <property type="entry name" value="Integrator complex subunit 6 like"/>
    <property type="match status" value="1"/>
</dbReference>
<dbReference type="Gene3D" id="3.40.50.410">
    <property type="entry name" value="von Willebrand factor, type A domain"/>
    <property type="match status" value="1"/>
</dbReference>
<dbReference type="InterPro" id="IPR029307">
    <property type="entry name" value="INT_SG_DDX_CT_C"/>
</dbReference>
<dbReference type="InterPro" id="IPR051113">
    <property type="entry name" value="Integrator_subunit6"/>
</dbReference>
<dbReference type="InterPro" id="IPR002035">
    <property type="entry name" value="VWF_A"/>
</dbReference>
<dbReference type="InterPro" id="IPR036465">
    <property type="entry name" value="vWFA_dom_sf"/>
</dbReference>
<dbReference type="PANTHER" id="PTHR12957">
    <property type="entry name" value="DEAD/H BOX POLYPEPTIDE 26/DICE1-RELATED"/>
    <property type="match status" value="1"/>
</dbReference>
<dbReference type="PANTHER" id="PTHR12957:SF23">
    <property type="entry name" value="INTEGRATOR COMPLEX SUBUNIT 6"/>
    <property type="match status" value="1"/>
</dbReference>
<dbReference type="Pfam" id="PF25462">
    <property type="entry name" value="Beta-barrel_INTS6"/>
    <property type="match status" value="1"/>
</dbReference>
<dbReference type="Pfam" id="PF15300">
    <property type="entry name" value="INT_SG_DDX_CT_C"/>
    <property type="match status" value="1"/>
</dbReference>
<dbReference type="Pfam" id="PF13519">
    <property type="entry name" value="VWA_2"/>
    <property type="match status" value="1"/>
</dbReference>
<dbReference type="SUPFAM" id="SSF53300">
    <property type="entry name" value="vWA-like"/>
    <property type="match status" value="1"/>
</dbReference>
<dbReference type="PROSITE" id="PS50234">
    <property type="entry name" value="VWFA"/>
    <property type="match status" value="1"/>
</dbReference>
<comment type="function">
    <text evidence="1">Component of the integrator complex, a multiprotein complex that terminates RNA polymerase II (Pol II) transcription in the promoter-proximal region of genes. The integrator complex provides a quality checkpoint during transcription elongation by driving premature transcription termination of transcripts that are unfavorably configured for transcriptional elongation: the complex terminates transcription by (1) catalyzing dephosphorylation of the C-terminal domain (CTD) of Pol II subunit POLR2A/RPB1 and SUPT5H/SPT5, (2) degrading the exiting nascent RNA transcript via endonuclease activity and (3) promoting the release of Pol II from bound DNA. The integrator complex is also involved in terminating the synthesis of non-coding Pol II transcripts, such as enhancer RNAs (eRNAs), small nuclear RNAs (snRNAs), telomerase RNAs and long non-coding RNAs (lncRNAs). Within the integrator complex, INTS6 acts as a molecular adapter that promotes assembly of protein phosphatase 2A (PP2A) subunits to the integrator core complex, promoting recruitment of PP2A to transcription pause-release checkpoint.</text>
</comment>
<comment type="subunit">
    <text evidence="1">Component of the Integrator complex, composed of core subunits INTS1, INTS2, INTS3, INTS4, INTS5, INTS6, INTS7, INTS8, INTS9/RC74, INTS10, INTS11/CPSF3L, INTS12, INTS13, INTS14 and INTS15. The core complex associates with protein phosphatase 2A subunits PPP2CA and PPP2R1A, to form the Integrator-PP2A (INTAC) complex.</text>
</comment>
<comment type="subcellular location">
    <subcellularLocation>
        <location evidence="1">Nucleus</location>
    </subcellularLocation>
    <subcellularLocation>
        <location evidence="1">Chromosome</location>
    </subcellularLocation>
    <text evidence="1">Associates with chromatin and transcription pause-release checkpoint.</text>
</comment>
<comment type="domain">
    <text evidence="1">The inhibitory loop acts as a regulator of protein phosphatase 2A (PP2A) activity: Asp-629 and Glu-630 residues mimic phosphoserine and phosphothreonine residues and bind to the PP2A catalytic subunit PPP2CA active site to block substrate-binding.</text>
</comment>
<comment type="similarity">
    <text evidence="3">Belongs to the Integrator subunit 6 family.</text>
</comment>
<evidence type="ECO:0000250" key="1">
    <source>
        <dbReference type="UniProtKB" id="Q9UL03"/>
    </source>
</evidence>
<evidence type="ECO:0000255" key="2">
    <source>
        <dbReference type="PROSITE-ProRule" id="PRU00219"/>
    </source>
</evidence>
<evidence type="ECO:0000305" key="3"/>
<feature type="chain" id="PRO_0000259546" description="Integrator complex subunit 6-A">
    <location>
        <begin position="1"/>
        <end position="883"/>
    </location>
</feature>
<feature type="domain" description="VWFA" evidence="2">
    <location>
        <begin position="3"/>
        <end position="227"/>
    </location>
</feature>
<feature type="short sequence motif" description="Inhibitory loop" evidence="1">
    <location>
        <begin position="626"/>
        <end position="633"/>
    </location>
</feature>
<organism>
    <name type="scientific">Xenopus laevis</name>
    <name type="common">African clawed frog</name>
    <dbReference type="NCBI Taxonomy" id="8355"/>
    <lineage>
        <taxon>Eukaryota</taxon>
        <taxon>Metazoa</taxon>
        <taxon>Chordata</taxon>
        <taxon>Craniata</taxon>
        <taxon>Vertebrata</taxon>
        <taxon>Euteleostomi</taxon>
        <taxon>Amphibia</taxon>
        <taxon>Batrachia</taxon>
        <taxon>Anura</taxon>
        <taxon>Pipoidea</taxon>
        <taxon>Pipidae</taxon>
        <taxon>Xenopodinae</taxon>
        <taxon>Xenopus</taxon>
        <taxon>Xenopus</taxon>
    </lineage>
</organism>
<proteinExistence type="evidence at transcript level"/>
<sequence length="883" mass="99867">MPILLFLLDTSASMNQRSHLGTTYLDIAKGAVETFMKLRSRDPASRGDRYMLVTVEEPPYGIKAGWKENHATFMNELKNLQAVGLTTLGQSLRTAFDLLNLNRLVTGIDNYGQGRNPFFLEPSIIIVITDGSKLTTANGVQDELHLPLYSPLPGSELTKEPFRWDQRLFALVLRLPGASLVEQEQPPAVQFDESPITAMCDVTGGRSYSVTSQRILNQCLESLVQKVQSGVVIHFEKSGPDPPILEDGLTDPVRSVGSQPWHNCHKLIYVRPNPKTGVPLGHWPIPESFWPDQNSPTLPPRTSHPVVKFSCTDSEPMIIDKLPFDKYELEPSPLTQFILERKSPHSCWPVFVANSAKYSELGHPFGYLKASTALNCVNLFVLPYNYPVFLPLLDDLFKIHKNKPSLKWRQLFENYLKTMPPYYIGPLKKALRMMGAPNLMPDSMEYGLSYSVVSYLKKLSQQAKVESDRVIGSIGKKFPQETGIKVRSGSNALSLALRKDFKQLLQEITGEVPQRPMDLNMKEFAGFQIALLNKDIKPQTFRNAYDVPRTNLLDHLTRMRVNLLRSTRQFLKGQDEDQAHSIPIVQMGNYQEFLKHIPSPLRELDYDQPRRLHTFGNPFKLDKKGMMIDEADEFVSGNQNKHKRTGEPNMQGVPKRRRCMSPLLRSRPQSPAVINNHIGGKDPPISVNQVSPDLPKPVAVHKNTDLSNNATVNEATENHVADHFCDDLLITKSEPFGTLSSAALEATEGYAAEKDSNFRPNDISDVFLENTKETGDNESCLPNNNAAFTHRKRRLQQCRSYEEANIELKAQILKEIRKPGRKYGIIFTLLKDVQGDLQTRLLFLQNVIQEAARFKKRNLIEQLEGFLEEIHRRASQVNHLSSC</sequence>
<protein>
    <recommendedName>
        <fullName>Integrator complex subunit 6-A</fullName>
        <shortName>Int6-A</shortName>
    </recommendedName>
</protein>